<evidence type="ECO:0000255" key="1">
    <source>
        <dbReference type="HAMAP-Rule" id="MF_01576"/>
    </source>
</evidence>
<gene>
    <name evidence="1" type="primary">folD</name>
    <name type="ordered locus">Dtur_1636</name>
</gene>
<dbReference type="EC" id="1.5.1.5" evidence="1"/>
<dbReference type="EC" id="3.5.4.9" evidence="1"/>
<dbReference type="EMBL" id="CP001251">
    <property type="protein sequence ID" value="ACK42909.1"/>
    <property type="molecule type" value="Genomic_DNA"/>
</dbReference>
<dbReference type="RefSeq" id="WP_012583984.1">
    <property type="nucleotide sequence ID" value="NC_011661.1"/>
</dbReference>
<dbReference type="RefSeq" id="YP_002353523.1">
    <property type="nucleotide sequence ID" value="NC_011661.1"/>
</dbReference>
<dbReference type="SMR" id="B8E335"/>
<dbReference type="FunCoup" id="B8E335">
    <property type="interactions" value="310"/>
</dbReference>
<dbReference type="STRING" id="515635.Dtur_1636"/>
<dbReference type="EnsemblBacteria" id="ACK42909">
    <property type="protein sequence ID" value="ACK42909"/>
    <property type="gene ID" value="Dtur_1636"/>
</dbReference>
<dbReference type="KEGG" id="dtu:Dtur_1636"/>
<dbReference type="PATRIC" id="fig|515635.4.peg.1685"/>
<dbReference type="eggNOG" id="COG0190">
    <property type="taxonomic scope" value="Bacteria"/>
</dbReference>
<dbReference type="HOGENOM" id="CLU_034045_2_1_0"/>
<dbReference type="InParanoid" id="B8E335"/>
<dbReference type="OrthoDB" id="9803580at2"/>
<dbReference type="UniPathway" id="UPA00193"/>
<dbReference type="Proteomes" id="UP000007719">
    <property type="component" value="Chromosome"/>
</dbReference>
<dbReference type="GO" id="GO:0005829">
    <property type="term" value="C:cytosol"/>
    <property type="evidence" value="ECO:0000318"/>
    <property type="project" value="GO_Central"/>
</dbReference>
<dbReference type="GO" id="GO:0004477">
    <property type="term" value="F:methenyltetrahydrofolate cyclohydrolase activity"/>
    <property type="evidence" value="ECO:0000318"/>
    <property type="project" value="GO_Central"/>
</dbReference>
<dbReference type="GO" id="GO:0004488">
    <property type="term" value="F:methylenetetrahydrofolate dehydrogenase (NADP+) activity"/>
    <property type="evidence" value="ECO:0000318"/>
    <property type="project" value="GO_Central"/>
</dbReference>
<dbReference type="GO" id="GO:0000105">
    <property type="term" value="P:L-histidine biosynthetic process"/>
    <property type="evidence" value="ECO:0007669"/>
    <property type="project" value="UniProtKB-KW"/>
</dbReference>
<dbReference type="GO" id="GO:0009086">
    <property type="term" value="P:methionine biosynthetic process"/>
    <property type="evidence" value="ECO:0007669"/>
    <property type="project" value="UniProtKB-KW"/>
</dbReference>
<dbReference type="GO" id="GO:0006164">
    <property type="term" value="P:purine nucleotide biosynthetic process"/>
    <property type="evidence" value="ECO:0007669"/>
    <property type="project" value="UniProtKB-KW"/>
</dbReference>
<dbReference type="GO" id="GO:0035999">
    <property type="term" value="P:tetrahydrofolate interconversion"/>
    <property type="evidence" value="ECO:0000318"/>
    <property type="project" value="GO_Central"/>
</dbReference>
<dbReference type="CDD" id="cd01080">
    <property type="entry name" value="NAD_bind_m-THF_DH_Cyclohyd"/>
    <property type="match status" value="1"/>
</dbReference>
<dbReference type="FunFam" id="3.40.50.720:FF:000094">
    <property type="entry name" value="Bifunctional protein FolD"/>
    <property type="match status" value="1"/>
</dbReference>
<dbReference type="Gene3D" id="3.40.50.10860">
    <property type="entry name" value="Leucine Dehydrogenase, chain A, domain 1"/>
    <property type="match status" value="1"/>
</dbReference>
<dbReference type="Gene3D" id="3.40.50.720">
    <property type="entry name" value="NAD(P)-binding Rossmann-like Domain"/>
    <property type="match status" value="1"/>
</dbReference>
<dbReference type="HAMAP" id="MF_01576">
    <property type="entry name" value="THF_DHG_CYH"/>
    <property type="match status" value="1"/>
</dbReference>
<dbReference type="InterPro" id="IPR046346">
    <property type="entry name" value="Aminoacid_DH-like_N_sf"/>
</dbReference>
<dbReference type="InterPro" id="IPR036291">
    <property type="entry name" value="NAD(P)-bd_dom_sf"/>
</dbReference>
<dbReference type="InterPro" id="IPR000672">
    <property type="entry name" value="THF_DH/CycHdrlase"/>
</dbReference>
<dbReference type="InterPro" id="IPR020630">
    <property type="entry name" value="THF_DH/CycHdrlase_cat_dom"/>
</dbReference>
<dbReference type="InterPro" id="IPR020631">
    <property type="entry name" value="THF_DH/CycHdrlase_NAD-bd_dom"/>
</dbReference>
<dbReference type="PANTHER" id="PTHR48099:SF5">
    <property type="entry name" value="C-1-TETRAHYDROFOLATE SYNTHASE, CYTOPLASMIC"/>
    <property type="match status" value="1"/>
</dbReference>
<dbReference type="PANTHER" id="PTHR48099">
    <property type="entry name" value="C-1-TETRAHYDROFOLATE SYNTHASE, CYTOPLASMIC-RELATED"/>
    <property type="match status" value="1"/>
</dbReference>
<dbReference type="Pfam" id="PF00763">
    <property type="entry name" value="THF_DHG_CYH"/>
    <property type="match status" value="1"/>
</dbReference>
<dbReference type="Pfam" id="PF02882">
    <property type="entry name" value="THF_DHG_CYH_C"/>
    <property type="match status" value="1"/>
</dbReference>
<dbReference type="PRINTS" id="PR00085">
    <property type="entry name" value="THFDHDRGNASE"/>
</dbReference>
<dbReference type="SUPFAM" id="SSF53223">
    <property type="entry name" value="Aminoacid dehydrogenase-like, N-terminal domain"/>
    <property type="match status" value="1"/>
</dbReference>
<dbReference type="SUPFAM" id="SSF51735">
    <property type="entry name" value="NAD(P)-binding Rossmann-fold domains"/>
    <property type="match status" value="1"/>
</dbReference>
<feature type="chain" id="PRO_1000196768" description="Bifunctional protein FolD">
    <location>
        <begin position="1"/>
        <end position="281"/>
    </location>
</feature>
<feature type="binding site" evidence="1">
    <location>
        <begin position="164"/>
        <end position="166"/>
    </location>
    <ligand>
        <name>NADP(+)</name>
        <dbReference type="ChEBI" id="CHEBI:58349"/>
    </ligand>
</feature>
<feature type="binding site" evidence="1">
    <location>
        <position position="189"/>
    </location>
    <ligand>
        <name>NADP(+)</name>
        <dbReference type="ChEBI" id="CHEBI:58349"/>
    </ligand>
</feature>
<feature type="binding site" evidence="1">
    <location>
        <position position="230"/>
    </location>
    <ligand>
        <name>NADP(+)</name>
        <dbReference type="ChEBI" id="CHEBI:58349"/>
    </ligand>
</feature>
<name>FOLD_DICTD</name>
<keyword id="KW-0028">Amino-acid biosynthesis</keyword>
<keyword id="KW-0368">Histidine biosynthesis</keyword>
<keyword id="KW-0378">Hydrolase</keyword>
<keyword id="KW-0486">Methionine biosynthesis</keyword>
<keyword id="KW-0511">Multifunctional enzyme</keyword>
<keyword id="KW-0521">NADP</keyword>
<keyword id="KW-0554">One-carbon metabolism</keyword>
<keyword id="KW-0560">Oxidoreductase</keyword>
<keyword id="KW-0658">Purine biosynthesis</keyword>
<keyword id="KW-1185">Reference proteome</keyword>
<reference key="1">
    <citation type="journal article" date="2016" name="Front. Microbiol.">
        <title>The complete genome sequence of hyperthermophile Dictyoglomus turgidum DSM 6724 reveals a specialized carbohydrate fermentor.</title>
        <authorList>
            <person name="Brumm P.J."/>
            <person name="Gowda K."/>
            <person name="Robb F.T."/>
            <person name="Mead D.A."/>
        </authorList>
    </citation>
    <scope>NUCLEOTIDE SEQUENCE [LARGE SCALE GENOMIC DNA]</scope>
    <source>
        <strain>DSM 6724 / Z-1310</strain>
    </source>
</reference>
<organism>
    <name type="scientific">Dictyoglomus turgidum (strain DSM 6724 / Z-1310)</name>
    <dbReference type="NCBI Taxonomy" id="515635"/>
    <lineage>
        <taxon>Bacteria</taxon>
        <taxon>Pseudomonadati</taxon>
        <taxon>Dictyoglomota</taxon>
        <taxon>Dictyoglomia</taxon>
        <taxon>Dictyoglomales</taxon>
        <taxon>Dictyoglomaceae</taxon>
        <taxon>Dictyoglomus</taxon>
    </lineage>
</organism>
<comment type="function">
    <text evidence="1">Catalyzes the oxidation of 5,10-methylenetetrahydrofolate to 5,10-methenyltetrahydrofolate and then the hydrolysis of 5,10-methenyltetrahydrofolate to 10-formyltetrahydrofolate.</text>
</comment>
<comment type="catalytic activity">
    <reaction evidence="1">
        <text>(6R)-5,10-methylene-5,6,7,8-tetrahydrofolate + NADP(+) = (6R)-5,10-methenyltetrahydrofolate + NADPH</text>
        <dbReference type="Rhea" id="RHEA:22812"/>
        <dbReference type="ChEBI" id="CHEBI:15636"/>
        <dbReference type="ChEBI" id="CHEBI:57455"/>
        <dbReference type="ChEBI" id="CHEBI:57783"/>
        <dbReference type="ChEBI" id="CHEBI:58349"/>
        <dbReference type="EC" id="1.5.1.5"/>
    </reaction>
</comment>
<comment type="catalytic activity">
    <reaction evidence="1">
        <text>(6R)-5,10-methenyltetrahydrofolate + H2O = (6R)-10-formyltetrahydrofolate + H(+)</text>
        <dbReference type="Rhea" id="RHEA:23700"/>
        <dbReference type="ChEBI" id="CHEBI:15377"/>
        <dbReference type="ChEBI" id="CHEBI:15378"/>
        <dbReference type="ChEBI" id="CHEBI:57455"/>
        <dbReference type="ChEBI" id="CHEBI:195366"/>
        <dbReference type="EC" id="3.5.4.9"/>
    </reaction>
</comment>
<comment type="pathway">
    <text evidence="1">One-carbon metabolism; tetrahydrofolate interconversion.</text>
</comment>
<comment type="subunit">
    <text evidence="1">Homodimer.</text>
</comment>
<comment type="similarity">
    <text evidence="1">Belongs to the tetrahydrofolate dehydrogenase/cyclohydrolase family.</text>
</comment>
<protein>
    <recommendedName>
        <fullName evidence="1">Bifunctional protein FolD</fullName>
    </recommendedName>
    <domain>
        <recommendedName>
            <fullName evidence="1">Methylenetetrahydrofolate dehydrogenase</fullName>
            <ecNumber evidence="1">1.5.1.5</ecNumber>
        </recommendedName>
    </domain>
    <domain>
        <recommendedName>
            <fullName evidence="1">Methenyltetrahydrofolate cyclohydrolase</fullName>
            <ecNumber evidence="1">3.5.4.9</ecNumber>
        </recommendedName>
    </domain>
</protein>
<sequence>MGVILEGKPVAEKLEKEIKEKIQFYKSQGVIPTLCIVKVGKNAEAEAYAKSIEKFFSKIGINIERKNFNEEISLVDFKKIMKELEEDSAIHGVLILRPLPEELERGKAFQFLPTKKDVEGVTYENLGRLLVGEDSFHPCTPQAVLELLDFYQIPVEGKNVVVVGRSISVGKPLSLLLLNRNATITVCHSKTKNLVEFTKKAEILIVAIGKPYFVGKDMVGEGQVIIDVGTNVVDGKLVGDVNFEEVKDKVEYITPVPGGIGVITTRVLAMNLLKAVKKVEA</sequence>
<proteinExistence type="inferred from homology"/>
<accession>B8E335</accession>